<organism>
    <name type="scientific">Macaca fascicularis</name>
    <name type="common">Crab-eating macaque</name>
    <name type="synonym">Cynomolgus monkey</name>
    <dbReference type="NCBI Taxonomy" id="9541"/>
    <lineage>
        <taxon>Eukaryota</taxon>
        <taxon>Metazoa</taxon>
        <taxon>Chordata</taxon>
        <taxon>Craniata</taxon>
        <taxon>Vertebrata</taxon>
        <taxon>Euteleostomi</taxon>
        <taxon>Mammalia</taxon>
        <taxon>Eutheria</taxon>
        <taxon>Euarchontoglires</taxon>
        <taxon>Primates</taxon>
        <taxon>Haplorrhini</taxon>
        <taxon>Catarrhini</taxon>
        <taxon>Cercopithecidae</taxon>
        <taxon>Cercopithecinae</taxon>
        <taxon>Macaca</taxon>
    </lineage>
</organism>
<feature type="chain" id="PRO_0000207641" description="Sterol O-acyltransferase 1">
    <location>
        <begin position="1"/>
        <end position="550"/>
    </location>
</feature>
<feature type="topological domain" description="Cytoplasmic" evidence="3">
    <location>
        <begin position="1"/>
        <end position="138"/>
    </location>
</feature>
<feature type="transmembrane region" description="Helical; Name=1" evidence="1">
    <location>
        <begin position="139"/>
        <end position="160"/>
    </location>
</feature>
<feature type="topological domain" description="Lumenal" evidence="3">
    <location>
        <begin position="161"/>
        <end position="180"/>
    </location>
</feature>
<feature type="transmembrane region" description="Helical; Name=2" evidence="1">
    <location>
        <begin position="181"/>
        <end position="206"/>
    </location>
</feature>
<feature type="topological domain" description="Cytoplasmic" evidence="3">
    <location>
        <begin position="207"/>
        <end position="218"/>
    </location>
</feature>
<feature type="transmembrane region" description="Helical; Name=3" evidence="1">
    <location>
        <begin position="219"/>
        <end position="244"/>
    </location>
</feature>
<feature type="topological domain" description="Lumenal" evidence="3">
    <location>
        <begin position="245"/>
        <end position="252"/>
    </location>
</feature>
<feature type="transmembrane region" description="Helical; Name=4" evidence="1">
    <location>
        <begin position="253"/>
        <end position="276"/>
    </location>
</feature>
<feature type="topological domain" description="Cytoplasmic" evidence="3">
    <location>
        <begin position="277"/>
        <end position="319"/>
    </location>
</feature>
<feature type="transmembrane region" description="Helical; Name=5" evidence="1">
    <location>
        <begin position="320"/>
        <end position="352"/>
    </location>
</feature>
<feature type="topological domain" description="Lumenal" evidence="3">
    <location>
        <begin position="353"/>
        <end position="369"/>
    </location>
</feature>
<feature type="transmembrane region" description="Helical; Name=6" evidence="1">
    <location>
        <begin position="370"/>
        <end position="395"/>
    </location>
</feature>
<feature type="topological domain" description="Cytoplasmic" evidence="3">
    <location>
        <begin position="396"/>
        <end position="443"/>
    </location>
</feature>
<feature type="transmembrane region" description="Helical; Name=7" evidence="1">
    <location>
        <begin position="444"/>
        <end position="468"/>
    </location>
</feature>
<feature type="topological domain" description="Lumenal" evidence="3">
    <location>
        <begin position="469"/>
        <end position="474"/>
    </location>
</feature>
<feature type="transmembrane region" description="Helical; Name=8" evidence="1">
    <location>
        <begin position="475"/>
        <end position="490"/>
    </location>
</feature>
<feature type="topological domain" description="Cytoplasmic" evidence="3">
    <location>
        <begin position="491"/>
        <end position="496"/>
    </location>
</feature>
<feature type="transmembrane region" description="Helical; Name=9" evidence="1">
    <location>
        <begin position="497"/>
        <end position="528"/>
    </location>
</feature>
<feature type="topological domain" description="Lumenal" evidence="3">
    <location>
        <begin position="529"/>
        <end position="550"/>
    </location>
</feature>
<feature type="region of interest" description="Disordered" evidence="2">
    <location>
        <begin position="1"/>
        <end position="36"/>
    </location>
</feature>
<feature type="short sequence motif" description="FYXDWWN motif" evidence="1">
    <location>
        <begin position="403"/>
        <end position="409"/>
    </location>
</feature>
<feature type="compositionally biased region" description="Basic and acidic residues" evidence="2">
    <location>
        <begin position="15"/>
        <end position="34"/>
    </location>
</feature>
<feature type="active site" evidence="1">
    <location>
        <position position="460"/>
    </location>
</feature>
<feature type="binding site" evidence="1">
    <location>
        <position position="137"/>
    </location>
    <ligand>
        <name>cholesterol</name>
        <dbReference type="ChEBI" id="CHEBI:16113"/>
    </ligand>
</feature>
<feature type="binding site" evidence="1">
    <location>
        <position position="415"/>
    </location>
    <ligand>
        <name>an acyl-CoA</name>
        <dbReference type="ChEBI" id="CHEBI:58342"/>
    </ligand>
</feature>
<feature type="binding site" evidence="1">
    <location>
        <position position="418"/>
    </location>
    <ligand>
        <name>an acyl-CoA</name>
        <dbReference type="ChEBI" id="CHEBI:58342"/>
    </ligand>
</feature>
<feature type="binding site" evidence="1">
    <location>
        <position position="421"/>
    </location>
    <ligand>
        <name>an acyl-CoA</name>
        <dbReference type="ChEBI" id="CHEBI:58342"/>
    </ligand>
</feature>
<feature type="binding site" evidence="1">
    <location>
        <position position="425"/>
    </location>
    <ligand>
        <name>an acyl-CoA</name>
        <dbReference type="ChEBI" id="CHEBI:58342"/>
    </ligand>
</feature>
<feature type="binding site" evidence="1">
    <location>
        <position position="433"/>
    </location>
    <ligand>
        <name>an acyl-CoA</name>
        <dbReference type="ChEBI" id="CHEBI:58342"/>
    </ligand>
</feature>
<feature type="binding site" evidence="1">
    <location>
        <position position="445"/>
    </location>
    <ligand>
        <name>an acyl-CoA</name>
        <dbReference type="ChEBI" id="CHEBI:58342"/>
    </ligand>
</feature>
<feature type="binding site" evidence="1">
    <location>
        <position position="456"/>
    </location>
    <ligand>
        <name>an acyl-CoA</name>
        <dbReference type="ChEBI" id="CHEBI:58342"/>
    </ligand>
</feature>
<feature type="modified residue" description="N-acetylmethionine" evidence="1">
    <location>
        <position position="1"/>
    </location>
</feature>
<feature type="modified residue" description="Phosphoserine" evidence="1">
    <location>
        <position position="8"/>
    </location>
</feature>
<feature type="disulfide bond" evidence="1">
    <location>
        <begin position="528"/>
        <end position="546"/>
    </location>
</feature>
<comment type="function">
    <text evidence="1">Catalyzes the formation of fatty acid-cholesterol esters, which are less soluble in membranes than cholesterol. Plays a role in lipoprotein assembly and dietary cholesterol absorption. Preferentially utilizes oleoyl-CoA ((9Z)-octadecenoyl-CoA) as a substrate: shows a higher activity towards an acyl-CoA substrate with a double bond at the delta-9 position (9Z) than towards saturated acyl-CoA or an unsaturated acyl-CoA with a double bond at the delta-7 (7Z) or delta-11 (11Z) positions.</text>
</comment>
<comment type="catalytic activity">
    <reaction evidence="1">
        <text>a sterol + a long-chain fatty acyl-CoA = a long-chain 3-hydroxysterol ester + CoA</text>
        <dbReference type="Rhea" id="RHEA:59816"/>
        <dbReference type="ChEBI" id="CHEBI:15889"/>
        <dbReference type="ChEBI" id="CHEBI:57287"/>
        <dbReference type="ChEBI" id="CHEBI:83139"/>
        <dbReference type="ChEBI" id="CHEBI:232093"/>
        <dbReference type="EC" id="2.3.1.26"/>
    </reaction>
    <physiologicalReaction direction="left-to-right" evidence="1">
        <dbReference type="Rhea" id="RHEA:59817"/>
    </physiologicalReaction>
</comment>
<comment type="catalytic activity">
    <reaction evidence="1">
        <text>cholesterol + an acyl-CoA = a cholesterol ester + CoA</text>
        <dbReference type="Rhea" id="RHEA:17729"/>
        <dbReference type="ChEBI" id="CHEBI:16113"/>
        <dbReference type="ChEBI" id="CHEBI:17002"/>
        <dbReference type="ChEBI" id="CHEBI:57287"/>
        <dbReference type="ChEBI" id="CHEBI:58342"/>
    </reaction>
    <physiologicalReaction direction="left-to-right" evidence="1">
        <dbReference type="Rhea" id="RHEA:17730"/>
    </physiologicalReaction>
</comment>
<comment type="catalytic activity">
    <reaction evidence="1">
        <text>cholesterol + (9Z)-octadecenoyl-CoA = cholesteryl (9Z-octadecenoate) + CoA</text>
        <dbReference type="Rhea" id="RHEA:41436"/>
        <dbReference type="ChEBI" id="CHEBI:16113"/>
        <dbReference type="ChEBI" id="CHEBI:46898"/>
        <dbReference type="ChEBI" id="CHEBI:57287"/>
        <dbReference type="ChEBI" id="CHEBI:57387"/>
    </reaction>
    <physiologicalReaction direction="left-to-right" evidence="1">
        <dbReference type="Rhea" id="RHEA:41437"/>
    </physiologicalReaction>
</comment>
<comment type="catalytic activity">
    <reaction evidence="1">
        <text>cholesterol + hexadecanoyl-CoA = cholesteryl hexadecanoate + CoA</text>
        <dbReference type="Rhea" id="RHEA:42792"/>
        <dbReference type="ChEBI" id="CHEBI:3663"/>
        <dbReference type="ChEBI" id="CHEBI:16113"/>
        <dbReference type="ChEBI" id="CHEBI:57287"/>
        <dbReference type="ChEBI" id="CHEBI:57379"/>
    </reaction>
    <physiologicalReaction direction="left-to-right" evidence="1">
        <dbReference type="Rhea" id="RHEA:42793"/>
    </physiologicalReaction>
</comment>
<comment type="catalytic activity">
    <reaction evidence="1">
        <text>octadecanoyl-CoA + cholesterol = cholesteryl octadecanoate + CoA</text>
        <dbReference type="Rhea" id="RHEA:42812"/>
        <dbReference type="ChEBI" id="CHEBI:16113"/>
        <dbReference type="ChEBI" id="CHEBI:57287"/>
        <dbReference type="ChEBI" id="CHEBI:57394"/>
        <dbReference type="ChEBI" id="CHEBI:82750"/>
    </reaction>
    <physiologicalReaction direction="left-to-right" evidence="1">
        <dbReference type="Rhea" id="RHEA:42813"/>
    </physiologicalReaction>
</comment>
<comment type="catalytic activity">
    <reaction evidence="1">
        <text>(9Z,12Z)-octadecadienoyl-CoA + cholesterol = cholesteryl (9Z,12Z)-octadecadienoate + CoA</text>
        <dbReference type="Rhea" id="RHEA:42796"/>
        <dbReference type="ChEBI" id="CHEBI:16113"/>
        <dbReference type="ChEBI" id="CHEBI:41509"/>
        <dbReference type="ChEBI" id="CHEBI:57287"/>
        <dbReference type="ChEBI" id="CHEBI:57383"/>
    </reaction>
    <physiologicalReaction direction="left-to-right" evidence="1">
        <dbReference type="Rhea" id="RHEA:42797"/>
    </physiologicalReaction>
</comment>
<comment type="catalytic activity">
    <reaction evidence="1">
        <text>(5Z,8Z,11Z,14Z)-eicosatetraenoyl-CoA + cholesterol = cholesteryl (5Z,8Z,11Z,14Z)-eicosatetraenoate + CoA</text>
        <dbReference type="Rhea" id="RHEA:42816"/>
        <dbReference type="ChEBI" id="CHEBI:16113"/>
        <dbReference type="ChEBI" id="CHEBI:57287"/>
        <dbReference type="ChEBI" id="CHEBI:57368"/>
        <dbReference type="ChEBI" id="CHEBI:82751"/>
    </reaction>
    <physiologicalReaction direction="left-to-right" evidence="1">
        <dbReference type="Rhea" id="RHEA:42817"/>
    </physiologicalReaction>
</comment>
<comment type="catalytic activity">
    <reaction evidence="1">
        <text>(9Z)-hexadecenoyl-CoA + cholesterol = cholesteryl (9Z)-hexadecenoate + CoA</text>
        <dbReference type="Rhea" id="RHEA:64320"/>
        <dbReference type="ChEBI" id="CHEBI:16113"/>
        <dbReference type="ChEBI" id="CHEBI:57287"/>
        <dbReference type="ChEBI" id="CHEBI:61540"/>
        <dbReference type="ChEBI" id="CHEBI:84323"/>
    </reaction>
    <physiologicalReaction direction="left-to-right" evidence="1">
        <dbReference type="Rhea" id="RHEA:64321"/>
    </physiologicalReaction>
</comment>
<comment type="catalytic activity">
    <reaction evidence="1">
        <text>(11Z)-octadecenoyl-CoA + cholesterol = cholesteryl (11Z)-octadecenoate + CoA</text>
        <dbReference type="Rhea" id="RHEA:64324"/>
        <dbReference type="ChEBI" id="CHEBI:16113"/>
        <dbReference type="ChEBI" id="CHEBI:57287"/>
        <dbReference type="ChEBI" id="CHEBI:75121"/>
        <dbReference type="ChEBI" id="CHEBI:88768"/>
    </reaction>
    <physiologicalReaction direction="left-to-right" evidence="1">
        <dbReference type="Rhea" id="RHEA:64325"/>
    </physiologicalReaction>
</comment>
<comment type="catalytic activity">
    <reaction evidence="1">
        <text>(7Z)-octadecenoyl-CoA + cholesterol = cholesteryl (7Z)-octadecenoate + CoA</text>
        <dbReference type="Rhea" id="RHEA:64328"/>
        <dbReference type="ChEBI" id="CHEBI:16113"/>
        <dbReference type="ChEBI" id="CHEBI:57287"/>
        <dbReference type="ChEBI" id="CHEBI:152049"/>
        <dbReference type="ChEBI" id="CHEBI:152050"/>
    </reaction>
    <physiologicalReaction direction="left-to-right" evidence="1">
        <dbReference type="Rhea" id="RHEA:64329"/>
    </physiologicalReaction>
</comment>
<comment type="subunit">
    <text evidence="1">May form homo- or heterodimers. Interacts with UBIAD1.</text>
</comment>
<comment type="subcellular location">
    <subcellularLocation>
        <location evidence="1">Endoplasmic reticulum membrane</location>
        <topology evidence="1">Multi-pass membrane protein</topology>
    </subcellularLocation>
</comment>
<comment type="tissue specificity">
    <text>Expressed in most tissues, but most strongly in the adrenal gland. Expressed more strongly in liver Kupffer cells than in hepatocytes.</text>
</comment>
<comment type="domain">
    <text evidence="1">Each protomer consists of 9 transmembrane segments, which enclose a cytosolic tunnel and a transmembrane tunnel that converge at the predicted catalytic site: acyl-CoA enters the active site through the cytosolic tunnel, whereas cholesterol enters from the side through the transmembrane tunnel.</text>
</comment>
<comment type="similarity">
    <text evidence="3">Belongs to the membrane-bound acyltransferase family. Sterol o-acyltransferase subfamily.</text>
</comment>
<accession>O77761</accession>
<sequence length="550" mass="64700">MVGEEKMSLRNRLSKSRENPEEDEDQRKPAKESLEAPSNGRIDIKQLIAKKIKLTAEAEELKPFFMKEVGSHFDDFVTNLIEKSASLDNGGCALTTFSILEGEKNNHRAKDLRAPPEQGKIFIARRSLLDELLEVDHIRTIYHMFIALLILFILSTLVVDYIDEGRLVLEFSLLSYAFGKFPTVVWTWWIMFLSTFSVPYFLFQRWATGYSKSSHPLINSLFHGFLFMVFQIGILGFGPTYVVLAYTLPPASRFIIIFEQIRFVMKAHSFVRENVPRVLNSAKEKSSTVPIPTVNQYLYFLFAPTLIYRDSYPRNPTVRWGYVAMQFAQVFGCFFYVYYIFERLCAPLFRNIKQEPFSARVLVLCVFNSILPGVLILFLTFFAFLHCWLNAFAEMLRFGDRMFYKDWWNSTSYSNYYRTWNVVVHDWLYYYAYKDFLWFFSKRFKSAAMLAAFAVSAVVHEYALAVCLSFFYPVLFVLFMFFGMAFNFIVNDSRKKPIWNVMMWTSLFLGNGVLLCFYSQEWYARQHCPLKNPTFLDYVRPRSWTCRYVF</sequence>
<proteinExistence type="evidence at transcript level"/>
<keyword id="KW-0007">Acetylation</keyword>
<keyword id="KW-0012">Acyltransferase</keyword>
<keyword id="KW-0153">Cholesterol metabolism</keyword>
<keyword id="KW-1015">Disulfide bond</keyword>
<keyword id="KW-0256">Endoplasmic reticulum</keyword>
<keyword id="KW-0443">Lipid metabolism</keyword>
<keyword id="KW-0472">Membrane</keyword>
<keyword id="KW-0597">Phosphoprotein</keyword>
<keyword id="KW-1185">Reference proteome</keyword>
<keyword id="KW-0753">Steroid metabolism</keyword>
<keyword id="KW-1207">Sterol metabolism</keyword>
<keyword id="KW-0808">Transferase</keyword>
<keyword id="KW-0812">Transmembrane</keyword>
<keyword id="KW-1133">Transmembrane helix</keyword>
<protein>
    <recommendedName>
        <fullName>Sterol O-acyltransferase 1</fullName>
        <ecNumber evidence="1">2.3.1.26</ecNumber>
    </recommendedName>
    <alternativeName>
        <fullName>Acyl-coenzyme A:cholesterol acyltransferase 1</fullName>
        <shortName>ACAT-1</shortName>
    </alternativeName>
    <alternativeName>
        <fullName>Cholesterol acyltransferase 1</fullName>
    </alternativeName>
</protein>
<name>SOAT1_MACFA</name>
<evidence type="ECO:0000250" key="1">
    <source>
        <dbReference type="UniProtKB" id="P35610"/>
    </source>
</evidence>
<evidence type="ECO:0000256" key="2">
    <source>
        <dbReference type="SAM" id="MobiDB-lite"/>
    </source>
</evidence>
<evidence type="ECO:0000305" key="3"/>
<gene>
    <name type="primary">SOAT1</name>
    <name type="synonym">ACAT</name>
    <name type="synonym">ACAT1</name>
</gene>
<dbReference type="EC" id="2.3.1.26" evidence="1"/>
<dbReference type="EMBL" id="AF053337">
    <property type="protein sequence ID" value="AAC62931.1"/>
    <property type="molecule type" value="mRNA"/>
</dbReference>
<dbReference type="SMR" id="O77761"/>
<dbReference type="STRING" id="9541.ENSMFAP00000032373"/>
<dbReference type="eggNOG" id="KOG0380">
    <property type="taxonomic scope" value="Eukaryota"/>
</dbReference>
<dbReference type="Proteomes" id="UP000233100">
    <property type="component" value="Unplaced"/>
</dbReference>
<dbReference type="GO" id="GO:0005789">
    <property type="term" value="C:endoplasmic reticulum membrane"/>
    <property type="evidence" value="ECO:0007669"/>
    <property type="project" value="UniProtKB-SubCell"/>
</dbReference>
<dbReference type="GO" id="GO:0015485">
    <property type="term" value="F:cholesterol binding"/>
    <property type="evidence" value="ECO:0000250"/>
    <property type="project" value="UniProtKB"/>
</dbReference>
<dbReference type="GO" id="GO:0034736">
    <property type="term" value="F:cholesterol O-acyltransferase activity"/>
    <property type="evidence" value="ECO:0000250"/>
    <property type="project" value="UniProtKB"/>
</dbReference>
<dbReference type="GO" id="GO:0000062">
    <property type="term" value="F:fatty-acyl-CoA binding"/>
    <property type="evidence" value="ECO:0007669"/>
    <property type="project" value="TreeGrafter"/>
</dbReference>
<dbReference type="GO" id="GO:0004772">
    <property type="term" value="F:sterol O-acyltransferase activity"/>
    <property type="evidence" value="ECO:0000250"/>
    <property type="project" value="UniProtKB"/>
</dbReference>
<dbReference type="GO" id="GO:0033344">
    <property type="term" value="P:cholesterol efflux"/>
    <property type="evidence" value="ECO:0007669"/>
    <property type="project" value="TreeGrafter"/>
</dbReference>
<dbReference type="GO" id="GO:0042632">
    <property type="term" value="P:cholesterol homeostasis"/>
    <property type="evidence" value="ECO:0000250"/>
    <property type="project" value="UniProtKB"/>
</dbReference>
<dbReference type="GO" id="GO:0008203">
    <property type="term" value="P:cholesterol metabolic process"/>
    <property type="evidence" value="ECO:0000250"/>
    <property type="project" value="UniProtKB"/>
</dbReference>
<dbReference type="InterPro" id="IPR004299">
    <property type="entry name" value="MBOAT_fam"/>
</dbReference>
<dbReference type="InterPro" id="IPR014371">
    <property type="entry name" value="Oat_ACAT_DAG_ARE"/>
</dbReference>
<dbReference type="InterPro" id="IPR030687">
    <property type="entry name" value="Sterol_acyltranf_meta"/>
</dbReference>
<dbReference type="PANTHER" id="PTHR10408">
    <property type="entry name" value="STEROL O-ACYLTRANSFERASE"/>
    <property type="match status" value="1"/>
</dbReference>
<dbReference type="PANTHER" id="PTHR10408:SF6">
    <property type="entry name" value="STEROL O-ACYLTRANSFERASE 1"/>
    <property type="match status" value="1"/>
</dbReference>
<dbReference type="Pfam" id="PF03062">
    <property type="entry name" value="MBOAT"/>
    <property type="match status" value="1"/>
</dbReference>
<dbReference type="PIRSF" id="PIRSF000439">
    <property type="entry name" value="Oat_ACAT_DAG_ARE"/>
    <property type="match status" value="1"/>
</dbReference>
<dbReference type="PIRSF" id="PIRSF500230">
    <property type="entry name" value="Sterol_acyltranf_ACAT"/>
    <property type="match status" value="1"/>
</dbReference>
<reference key="1">
    <citation type="journal article" date="1998" name="J. Biol. Chem.">
        <title>Identification of a form of acyl-CoA:cholesterol acyltransferase specific to liver and intestine in nonhuman primates.</title>
        <authorList>
            <person name="Anderson R.A."/>
            <person name="Joyce C."/>
            <person name="Davis M."/>
            <person name="Reagan J.W."/>
            <person name="Clark M."/>
            <person name="Shelness G.S."/>
            <person name="Rudel L.L."/>
        </authorList>
    </citation>
    <scope>NUCLEOTIDE SEQUENCE [MRNA]</scope>
    <source>
        <tissue>Adrenal gland</tissue>
    </source>
</reference>